<proteinExistence type="inferred from homology"/>
<protein>
    <recommendedName>
        <fullName evidence="1">3-isopropylmalate dehydratase large subunit</fullName>
        <ecNumber evidence="1">4.2.1.33</ecNumber>
    </recommendedName>
    <alternativeName>
        <fullName evidence="1">Alpha-IPM isomerase</fullName>
        <shortName evidence="1">IPMI</shortName>
    </alternativeName>
    <alternativeName>
        <fullName evidence="1">Isopropylmalate isomerase</fullName>
    </alternativeName>
</protein>
<sequence length="471" mass="51360">MKPKTIIDKIWENHVVYREEGKPDLLYIDLHLVHEVTSPQAFEGLRQKGRKVRRPDLTFATMDHNVPTVNRFVITDEVARNQIAALERNCREFGIPLADLHSEEQGIVHVIGPELGLTQPGKTIVCGDSHTSTHGAFGALAFGIGTSEVEHVLATQTLWQHKPKTLQICINGRLGKGVTAKDVILAIIGRYGVGVGTGYIIEFTGEAIRRMSMEERMTICNMSIEAGARAGLISPDETTFAYLRGRKYAPKGEEFDKAVERWRALASDEGAKYDKTIEIDASTIAPMVTWGTNPAMSTSVDGVVPHPEQFESKTEQNAVRRALEYMGLKPGTPITDIPVQHVFIGSCTNSRLSDLRAAASIVKGKKVAPGVRALVVPGSQQVKKQAEAEGLAQIFIDAGFEWRDSGCSACLGMNPDIIPEGEHCASTSNRNFEGRQGKGARTHLVSPVMAAAAAIYGHFVDVRQLEAEPVC</sequence>
<feature type="chain" id="PRO_0000076748" description="3-isopropylmalate dehydratase large subunit">
    <location>
        <begin position="1"/>
        <end position="471"/>
    </location>
</feature>
<feature type="binding site" evidence="1">
    <location>
        <position position="347"/>
    </location>
    <ligand>
        <name>[4Fe-4S] cluster</name>
        <dbReference type="ChEBI" id="CHEBI:49883"/>
    </ligand>
</feature>
<feature type="binding site" evidence="1">
    <location>
        <position position="407"/>
    </location>
    <ligand>
        <name>[4Fe-4S] cluster</name>
        <dbReference type="ChEBI" id="CHEBI:49883"/>
    </ligand>
</feature>
<feature type="binding site" evidence="1">
    <location>
        <position position="410"/>
    </location>
    <ligand>
        <name>[4Fe-4S] cluster</name>
        <dbReference type="ChEBI" id="CHEBI:49883"/>
    </ligand>
</feature>
<dbReference type="EC" id="4.2.1.33" evidence="1"/>
<dbReference type="EMBL" id="BA000043">
    <property type="protein sequence ID" value="BAD76941.1"/>
    <property type="molecule type" value="Genomic_DNA"/>
</dbReference>
<dbReference type="RefSeq" id="WP_011232132.1">
    <property type="nucleotide sequence ID" value="NC_006510.1"/>
</dbReference>
<dbReference type="SMR" id="Q5KWJ5"/>
<dbReference type="STRING" id="235909.GK2656"/>
<dbReference type="KEGG" id="gka:GK2656"/>
<dbReference type="PATRIC" id="fig|235909.7.peg.2838"/>
<dbReference type="eggNOG" id="COG0065">
    <property type="taxonomic scope" value="Bacteria"/>
</dbReference>
<dbReference type="HOGENOM" id="CLU_006714_3_4_9"/>
<dbReference type="UniPathway" id="UPA00048">
    <property type="reaction ID" value="UER00071"/>
</dbReference>
<dbReference type="Proteomes" id="UP000001172">
    <property type="component" value="Chromosome"/>
</dbReference>
<dbReference type="GO" id="GO:0003861">
    <property type="term" value="F:3-isopropylmalate dehydratase activity"/>
    <property type="evidence" value="ECO:0007669"/>
    <property type="project" value="UniProtKB-UniRule"/>
</dbReference>
<dbReference type="GO" id="GO:0051539">
    <property type="term" value="F:4 iron, 4 sulfur cluster binding"/>
    <property type="evidence" value="ECO:0007669"/>
    <property type="project" value="UniProtKB-KW"/>
</dbReference>
<dbReference type="GO" id="GO:0046872">
    <property type="term" value="F:metal ion binding"/>
    <property type="evidence" value="ECO:0007669"/>
    <property type="project" value="UniProtKB-KW"/>
</dbReference>
<dbReference type="GO" id="GO:0009098">
    <property type="term" value="P:L-leucine biosynthetic process"/>
    <property type="evidence" value="ECO:0007669"/>
    <property type="project" value="UniProtKB-UniRule"/>
</dbReference>
<dbReference type="CDD" id="cd01583">
    <property type="entry name" value="IPMI"/>
    <property type="match status" value="1"/>
</dbReference>
<dbReference type="FunFam" id="3.30.499.10:FF:000007">
    <property type="entry name" value="3-isopropylmalate dehydratase large subunit"/>
    <property type="match status" value="1"/>
</dbReference>
<dbReference type="Gene3D" id="3.30.499.10">
    <property type="entry name" value="Aconitase, domain 3"/>
    <property type="match status" value="2"/>
</dbReference>
<dbReference type="HAMAP" id="MF_01026">
    <property type="entry name" value="LeuC_type1"/>
    <property type="match status" value="1"/>
</dbReference>
<dbReference type="InterPro" id="IPR004430">
    <property type="entry name" value="3-IsopropMal_deHydase_lsu"/>
</dbReference>
<dbReference type="InterPro" id="IPR015931">
    <property type="entry name" value="Acnase/IPM_dHydase_lsu_aba_1/3"/>
</dbReference>
<dbReference type="InterPro" id="IPR001030">
    <property type="entry name" value="Acoase/IPM_deHydtase_lsu_aba"/>
</dbReference>
<dbReference type="InterPro" id="IPR018136">
    <property type="entry name" value="Aconitase_4Fe-4S_BS"/>
</dbReference>
<dbReference type="InterPro" id="IPR036008">
    <property type="entry name" value="Aconitase_4Fe-4S_dom"/>
</dbReference>
<dbReference type="InterPro" id="IPR050067">
    <property type="entry name" value="IPM_dehydratase_rel_enz"/>
</dbReference>
<dbReference type="InterPro" id="IPR033941">
    <property type="entry name" value="IPMI_cat"/>
</dbReference>
<dbReference type="NCBIfam" id="TIGR00170">
    <property type="entry name" value="leuC"/>
    <property type="match status" value="1"/>
</dbReference>
<dbReference type="NCBIfam" id="NF004016">
    <property type="entry name" value="PRK05478.1"/>
    <property type="match status" value="1"/>
</dbReference>
<dbReference type="NCBIfam" id="NF009116">
    <property type="entry name" value="PRK12466.1"/>
    <property type="match status" value="1"/>
</dbReference>
<dbReference type="PANTHER" id="PTHR43822:SF9">
    <property type="entry name" value="3-ISOPROPYLMALATE DEHYDRATASE"/>
    <property type="match status" value="1"/>
</dbReference>
<dbReference type="PANTHER" id="PTHR43822">
    <property type="entry name" value="HOMOACONITASE, MITOCHONDRIAL-RELATED"/>
    <property type="match status" value="1"/>
</dbReference>
<dbReference type="Pfam" id="PF00330">
    <property type="entry name" value="Aconitase"/>
    <property type="match status" value="1"/>
</dbReference>
<dbReference type="PRINTS" id="PR00415">
    <property type="entry name" value="ACONITASE"/>
</dbReference>
<dbReference type="SUPFAM" id="SSF53732">
    <property type="entry name" value="Aconitase iron-sulfur domain"/>
    <property type="match status" value="1"/>
</dbReference>
<dbReference type="PROSITE" id="PS00450">
    <property type="entry name" value="ACONITASE_1"/>
    <property type="match status" value="1"/>
</dbReference>
<dbReference type="PROSITE" id="PS01244">
    <property type="entry name" value="ACONITASE_2"/>
    <property type="match status" value="1"/>
</dbReference>
<reference key="1">
    <citation type="journal article" date="2004" name="Nucleic Acids Res.">
        <title>Thermoadaptation trait revealed by the genome sequence of thermophilic Geobacillus kaustophilus.</title>
        <authorList>
            <person name="Takami H."/>
            <person name="Takaki Y."/>
            <person name="Chee G.-J."/>
            <person name="Nishi S."/>
            <person name="Shimamura S."/>
            <person name="Suzuki H."/>
            <person name="Matsui S."/>
            <person name="Uchiyama I."/>
        </authorList>
    </citation>
    <scope>NUCLEOTIDE SEQUENCE [LARGE SCALE GENOMIC DNA]</scope>
    <source>
        <strain>HTA426</strain>
    </source>
</reference>
<organism>
    <name type="scientific">Geobacillus kaustophilus (strain HTA426)</name>
    <dbReference type="NCBI Taxonomy" id="235909"/>
    <lineage>
        <taxon>Bacteria</taxon>
        <taxon>Bacillati</taxon>
        <taxon>Bacillota</taxon>
        <taxon>Bacilli</taxon>
        <taxon>Bacillales</taxon>
        <taxon>Anoxybacillaceae</taxon>
        <taxon>Geobacillus</taxon>
        <taxon>Geobacillus thermoleovorans group</taxon>
    </lineage>
</organism>
<name>LEUC_GEOKA</name>
<keyword id="KW-0004">4Fe-4S</keyword>
<keyword id="KW-0028">Amino-acid biosynthesis</keyword>
<keyword id="KW-0100">Branched-chain amino acid biosynthesis</keyword>
<keyword id="KW-0408">Iron</keyword>
<keyword id="KW-0411">Iron-sulfur</keyword>
<keyword id="KW-0432">Leucine biosynthesis</keyword>
<keyword id="KW-0456">Lyase</keyword>
<keyword id="KW-0479">Metal-binding</keyword>
<keyword id="KW-1185">Reference proteome</keyword>
<gene>
    <name evidence="1" type="primary">leuC</name>
    <name type="ordered locus">GK2656</name>
</gene>
<accession>Q5KWJ5</accession>
<comment type="function">
    <text evidence="1">Catalyzes the isomerization between 2-isopropylmalate and 3-isopropylmalate, via the formation of 2-isopropylmaleate.</text>
</comment>
<comment type="catalytic activity">
    <reaction evidence="1">
        <text>(2R,3S)-3-isopropylmalate = (2S)-2-isopropylmalate</text>
        <dbReference type="Rhea" id="RHEA:32287"/>
        <dbReference type="ChEBI" id="CHEBI:1178"/>
        <dbReference type="ChEBI" id="CHEBI:35121"/>
        <dbReference type="EC" id="4.2.1.33"/>
    </reaction>
</comment>
<comment type="cofactor">
    <cofactor evidence="1">
        <name>[4Fe-4S] cluster</name>
        <dbReference type="ChEBI" id="CHEBI:49883"/>
    </cofactor>
    <text evidence="1">Binds 1 [4Fe-4S] cluster per subunit.</text>
</comment>
<comment type="pathway">
    <text evidence="1">Amino-acid biosynthesis; L-leucine biosynthesis; L-leucine from 3-methyl-2-oxobutanoate: step 2/4.</text>
</comment>
<comment type="subunit">
    <text evidence="1">Heterodimer of LeuC and LeuD.</text>
</comment>
<comment type="similarity">
    <text evidence="1">Belongs to the aconitase/IPM isomerase family. LeuC type 1 subfamily.</text>
</comment>
<evidence type="ECO:0000255" key="1">
    <source>
        <dbReference type="HAMAP-Rule" id="MF_01026"/>
    </source>
</evidence>